<evidence type="ECO:0000255" key="1">
    <source>
        <dbReference type="HAMAP-Rule" id="MF_00337"/>
    </source>
</evidence>
<feature type="chain" id="PRO_1000200253" description="Exodeoxyribonuclease 7 small subunit">
    <location>
        <begin position="1"/>
        <end position="76"/>
    </location>
</feature>
<organism>
    <name type="scientific">Geotalea daltonii (strain DSM 22248 / JCM 15807 / FRC-32)</name>
    <name type="common">Geobacter daltonii</name>
    <dbReference type="NCBI Taxonomy" id="316067"/>
    <lineage>
        <taxon>Bacteria</taxon>
        <taxon>Pseudomonadati</taxon>
        <taxon>Thermodesulfobacteriota</taxon>
        <taxon>Desulfuromonadia</taxon>
        <taxon>Geobacterales</taxon>
        <taxon>Geobacteraceae</taxon>
        <taxon>Geotalea</taxon>
    </lineage>
</organism>
<protein>
    <recommendedName>
        <fullName evidence="1">Exodeoxyribonuclease 7 small subunit</fullName>
        <ecNumber evidence="1">3.1.11.6</ecNumber>
    </recommendedName>
    <alternativeName>
        <fullName evidence="1">Exodeoxyribonuclease VII small subunit</fullName>
        <shortName evidence="1">Exonuclease VII small subunit</shortName>
    </alternativeName>
</protein>
<reference key="1">
    <citation type="submission" date="2009-01" db="EMBL/GenBank/DDBJ databases">
        <title>Complete sequence of Geobacter sp. FRC-32.</title>
        <authorList>
            <consortium name="US DOE Joint Genome Institute"/>
            <person name="Lucas S."/>
            <person name="Copeland A."/>
            <person name="Lapidus A."/>
            <person name="Glavina del Rio T."/>
            <person name="Dalin E."/>
            <person name="Tice H."/>
            <person name="Bruce D."/>
            <person name="Goodwin L."/>
            <person name="Pitluck S."/>
            <person name="Saunders E."/>
            <person name="Brettin T."/>
            <person name="Detter J.C."/>
            <person name="Han C."/>
            <person name="Larimer F."/>
            <person name="Land M."/>
            <person name="Hauser L."/>
            <person name="Kyrpides N."/>
            <person name="Ovchinnikova G."/>
            <person name="Kostka J."/>
            <person name="Richardson P."/>
        </authorList>
    </citation>
    <scope>NUCLEOTIDE SEQUENCE [LARGE SCALE GENOMIC DNA]</scope>
    <source>
        <strain>DSM 22248 / JCM 15807 / FRC-32</strain>
    </source>
</reference>
<dbReference type="EC" id="3.1.11.6" evidence="1"/>
<dbReference type="EMBL" id="CP001390">
    <property type="protein sequence ID" value="ACM20977.1"/>
    <property type="molecule type" value="Genomic_DNA"/>
</dbReference>
<dbReference type="RefSeq" id="WP_012647706.1">
    <property type="nucleotide sequence ID" value="NC_011979.1"/>
</dbReference>
<dbReference type="SMR" id="B9M0X4"/>
<dbReference type="STRING" id="316067.Geob_2627"/>
<dbReference type="KEGG" id="geo:Geob_2627"/>
<dbReference type="eggNOG" id="COG1722">
    <property type="taxonomic scope" value="Bacteria"/>
</dbReference>
<dbReference type="HOGENOM" id="CLU_145918_3_3_7"/>
<dbReference type="OrthoDB" id="5523157at2"/>
<dbReference type="Proteomes" id="UP000007721">
    <property type="component" value="Chromosome"/>
</dbReference>
<dbReference type="GO" id="GO:0005829">
    <property type="term" value="C:cytosol"/>
    <property type="evidence" value="ECO:0007669"/>
    <property type="project" value="TreeGrafter"/>
</dbReference>
<dbReference type="GO" id="GO:0009318">
    <property type="term" value="C:exodeoxyribonuclease VII complex"/>
    <property type="evidence" value="ECO:0007669"/>
    <property type="project" value="InterPro"/>
</dbReference>
<dbReference type="GO" id="GO:0008855">
    <property type="term" value="F:exodeoxyribonuclease VII activity"/>
    <property type="evidence" value="ECO:0007669"/>
    <property type="project" value="UniProtKB-UniRule"/>
</dbReference>
<dbReference type="GO" id="GO:0006308">
    <property type="term" value="P:DNA catabolic process"/>
    <property type="evidence" value="ECO:0007669"/>
    <property type="project" value="UniProtKB-UniRule"/>
</dbReference>
<dbReference type="Gene3D" id="1.10.287.1040">
    <property type="entry name" value="Exonuclease VII, small subunit"/>
    <property type="match status" value="1"/>
</dbReference>
<dbReference type="HAMAP" id="MF_00337">
    <property type="entry name" value="Exonuc_7_S"/>
    <property type="match status" value="1"/>
</dbReference>
<dbReference type="InterPro" id="IPR003761">
    <property type="entry name" value="Exonuc_VII_S"/>
</dbReference>
<dbReference type="InterPro" id="IPR037004">
    <property type="entry name" value="Exonuc_VII_ssu_sf"/>
</dbReference>
<dbReference type="NCBIfam" id="NF002140">
    <property type="entry name" value="PRK00977.1-4"/>
    <property type="match status" value="1"/>
</dbReference>
<dbReference type="NCBIfam" id="NF010669">
    <property type="entry name" value="PRK14066.1"/>
    <property type="match status" value="1"/>
</dbReference>
<dbReference type="NCBIfam" id="TIGR01280">
    <property type="entry name" value="xseB"/>
    <property type="match status" value="1"/>
</dbReference>
<dbReference type="PANTHER" id="PTHR34137">
    <property type="entry name" value="EXODEOXYRIBONUCLEASE 7 SMALL SUBUNIT"/>
    <property type="match status" value="1"/>
</dbReference>
<dbReference type="PANTHER" id="PTHR34137:SF1">
    <property type="entry name" value="EXODEOXYRIBONUCLEASE 7 SMALL SUBUNIT"/>
    <property type="match status" value="1"/>
</dbReference>
<dbReference type="Pfam" id="PF02609">
    <property type="entry name" value="Exonuc_VII_S"/>
    <property type="match status" value="1"/>
</dbReference>
<dbReference type="PIRSF" id="PIRSF006488">
    <property type="entry name" value="Exonuc_VII_S"/>
    <property type="match status" value="1"/>
</dbReference>
<dbReference type="SUPFAM" id="SSF116842">
    <property type="entry name" value="XseB-like"/>
    <property type="match status" value="1"/>
</dbReference>
<keyword id="KW-0963">Cytoplasm</keyword>
<keyword id="KW-0269">Exonuclease</keyword>
<keyword id="KW-0378">Hydrolase</keyword>
<keyword id="KW-0540">Nuclease</keyword>
<keyword id="KW-1185">Reference proteome</keyword>
<proteinExistence type="inferred from homology"/>
<comment type="function">
    <text evidence="1">Bidirectionally degrades single-stranded DNA into large acid-insoluble oligonucleotides, which are then degraded further into small acid-soluble oligonucleotides.</text>
</comment>
<comment type="catalytic activity">
    <reaction evidence="1">
        <text>Exonucleolytic cleavage in either 5'- to 3'- or 3'- to 5'-direction to yield nucleoside 5'-phosphates.</text>
        <dbReference type="EC" id="3.1.11.6"/>
    </reaction>
</comment>
<comment type="subunit">
    <text evidence="1">Heterooligomer composed of large and small subunits.</text>
</comment>
<comment type="subcellular location">
    <subcellularLocation>
        <location evidence="1">Cytoplasm</location>
    </subcellularLocation>
</comment>
<comment type="similarity">
    <text evidence="1">Belongs to the XseB family.</text>
</comment>
<accession>B9M0X4</accession>
<name>EX7S_GEODF</name>
<sequence>MAVEKFETALKKLEEVVKKLEGGELSLEDSLKAFEEGIKQAAFCSKKLNEAEKRVEVLLKQKDGRFITEQFQPEDE</sequence>
<gene>
    <name evidence="1" type="primary">xseB</name>
    <name type="ordered locus">Geob_2627</name>
</gene>